<evidence type="ECO:0000255" key="1">
    <source>
        <dbReference type="HAMAP-Rule" id="MF_00736"/>
    </source>
</evidence>
<evidence type="ECO:0000305" key="2"/>
<proteinExistence type="inferred from homology"/>
<keyword id="KW-0488">Methylation</keyword>
<keyword id="KW-0687">Ribonucleoprotein</keyword>
<keyword id="KW-0689">Ribosomal protein</keyword>
<keyword id="KW-0694">RNA-binding</keyword>
<keyword id="KW-0699">rRNA-binding</keyword>
<dbReference type="EMBL" id="CP000378">
    <property type="protein sequence ID" value="ABF77669.1"/>
    <property type="molecule type" value="Genomic_DNA"/>
</dbReference>
<dbReference type="SMR" id="Q1BRT6"/>
<dbReference type="HOGENOM" id="CLU_074237_2_0_4"/>
<dbReference type="GO" id="GO:0022625">
    <property type="term" value="C:cytosolic large ribosomal subunit"/>
    <property type="evidence" value="ECO:0007669"/>
    <property type="project" value="TreeGrafter"/>
</dbReference>
<dbReference type="GO" id="GO:0070180">
    <property type="term" value="F:large ribosomal subunit rRNA binding"/>
    <property type="evidence" value="ECO:0007669"/>
    <property type="project" value="UniProtKB-UniRule"/>
</dbReference>
<dbReference type="GO" id="GO:0003735">
    <property type="term" value="F:structural constituent of ribosome"/>
    <property type="evidence" value="ECO:0007669"/>
    <property type="project" value="InterPro"/>
</dbReference>
<dbReference type="GO" id="GO:0006412">
    <property type="term" value="P:translation"/>
    <property type="evidence" value="ECO:0007669"/>
    <property type="project" value="UniProtKB-UniRule"/>
</dbReference>
<dbReference type="CDD" id="cd00349">
    <property type="entry name" value="Ribosomal_L11"/>
    <property type="match status" value="1"/>
</dbReference>
<dbReference type="FunFam" id="1.10.10.250:FF:000001">
    <property type="entry name" value="50S ribosomal protein L11"/>
    <property type="match status" value="1"/>
</dbReference>
<dbReference type="FunFam" id="3.30.1550.10:FF:000001">
    <property type="entry name" value="50S ribosomal protein L11"/>
    <property type="match status" value="1"/>
</dbReference>
<dbReference type="Gene3D" id="1.10.10.250">
    <property type="entry name" value="Ribosomal protein L11, C-terminal domain"/>
    <property type="match status" value="1"/>
</dbReference>
<dbReference type="Gene3D" id="3.30.1550.10">
    <property type="entry name" value="Ribosomal protein L11/L12, N-terminal domain"/>
    <property type="match status" value="1"/>
</dbReference>
<dbReference type="HAMAP" id="MF_00736">
    <property type="entry name" value="Ribosomal_uL11"/>
    <property type="match status" value="1"/>
</dbReference>
<dbReference type="InterPro" id="IPR000911">
    <property type="entry name" value="Ribosomal_uL11"/>
</dbReference>
<dbReference type="InterPro" id="IPR006519">
    <property type="entry name" value="Ribosomal_uL11_bac-typ"/>
</dbReference>
<dbReference type="InterPro" id="IPR020783">
    <property type="entry name" value="Ribosomal_uL11_C"/>
</dbReference>
<dbReference type="InterPro" id="IPR036769">
    <property type="entry name" value="Ribosomal_uL11_C_sf"/>
</dbReference>
<dbReference type="InterPro" id="IPR020785">
    <property type="entry name" value="Ribosomal_uL11_CS"/>
</dbReference>
<dbReference type="InterPro" id="IPR020784">
    <property type="entry name" value="Ribosomal_uL11_N"/>
</dbReference>
<dbReference type="InterPro" id="IPR036796">
    <property type="entry name" value="Ribosomal_uL11_N_sf"/>
</dbReference>
<dbReference type="NCBIfam" id="TIGR01632">
    <property type="entry name" value="L11_bact"/>
    <property type="match status" value="1"/>
</dbReference>
<dbReference type="PANTHER" id="PTHR11661">
    <property type="entry name" value="60S RIBOSOMAL PROTEIN L12"/>
    <property type="match status" value="1"/>
</dbReference>
<dbReference type="PANTHER" id="PTHR11661:SF1">
    <property type="entry name" value="LARGE RIBOSOMAL SUBUNIT PROTEIN UL11M"/>
    <property type="match status" value="1"/>
</dbReference>
<dbReference type="Pfam" id="PF00298">
    <property type="entry name" value="Ribosomal_L11"/>
    <property type="match status" value="1"/>
</dbReference>
<dbReference type="Pfam" id="PF03946">
    <property type="entry name" value="Ribosomal_L11_N"/>
    <property type="match status" value="1"/>
</dbReference>
<dbReference type="SMART" id="SM00649">
    <property type="entry name" value="RL11"/>
    <property type="match status" value="1"/>
</dbReference>
<dbReference type="SUPFAM" id="SSF54747">
    <property type="entry name" value="Ribosomal L11/L12e N-terminal domain"/>
    <property type="match status" value="1"/>
</dbReference>
<dbReference type="SUPFAM" id="SSF46906">
    <property type="entry name" value="Ribosomal protein L11, C-terminal domain"/>
    <property type="match status" value="1"/>
</dbReference>
<dbReference type="PROSITE" id="PS00359">
    <property type="entry name" value="RIBOSOMAL_L11"/>
    <property type="match status" value="1"/>
</dbReference>
<accession>Q1BRT6</accession>
<reference key="1">
    <citation type="submission" date="2006-05" db="EMBL/GenBank/DDBJ databases">
        <title>Complete sequence of chromosome 1 of Burkholderia cenocepacia AU 1054.</title>
        <authorList>
            <consortium name="US DOE Joint Genome Institute"/>
            <person name="Copeland A."/>
            <person name="Lucas S."/>
            <person name="Lapidus A."/>
            <person name="Barry K."/>
            <person name="Detter J.C."/>
            <person name="Glavina del Rio T."/>
            <person name="Hammon N."/>
            <person name="Israni S."/>
            <person name="Dalin E."/>
            <person name="Tice H."/>
            <person name="Pitluck S."/>
            <person name="Chain P."/>
            <person name="Malfatti S."/>
            <person name="Shin M."/>
            <person name="Vergez L."/>
            <person name="Schmutz J."/>
            <person name="Larimer F."/>
            <person name="Land M."/>
            <person name="Hauser L."/>
            <person name="Kyrpides N."/>
            <person name="Lykidis A."/>
            <person name="LiPuma J.J."/>
            <person name="Konstantinidis K."/>
            <person name="Tiedje J.M."/>
            <person name="Richardson P."/>
        </authorList>
    </citation>
    <scope>NUCLEOTIDE SEQUENCE [LARGE SCALE GENOMIC DNA]</scope>
    <source>
        <strain>AU 1054</strain>
    </source>
</reference>
<protein>
    <recommendedName>
        <fullName evidence="1">Large ribosomal subunit protein uL11</fullName>
    </recommendedName>
    <alternativeName>
        <fullName evidence="2">50S ribosomal protein L11</fullName>
    </alternativeName>
</protein>
<sequence length="143" mass="14916">MAKKIIGFIKLQIPAGKANPSPPVGPALGQRGLNIMEFCKAFNAQTQGMEPGLPVPVVITAFADKSFTFVMKTPPATVLIKKAAKVDKGSSKPHTDKVGSITRAQAEEIAKTKMPDLTAADLDAAVRTIAGSARSMGITVEGV</sequence>
<organism>
    <name type="scientific">Burkholderia orbicola (strain AU 1054)</name>
    <dbReference type="NCBI Taxonomy" id="331271"/>
    <lineage>
        <taxon>Bacteria</taxon>
        <taxon>Pseudomonadati</taxon>
        <taxon>Pseudomonadota</taxon>
        <taxon>Betaproteobacteria</taxon>
        <taxon>Burkholderiales</taxon>
        <taxon>Burkholderiaceae</taxon>
        <taxon>Burkholderia</taxon>
        <taxon>Burkholderia cepacia complex</taxon>
        <taxon>Burkholderia orbicola</taxon>
    </lineage>
</organism>
<gene>
    <name evidence="1" type="primary">rplK</name>
    <name type="ordered locus">Bcen_2771</name>
</gene>
<name>RL11_BURO1</name>
<comment type="function">
    <text evidence="1">Forms part of the ribosomal stalk which helps the ribosome interact with GTP-bound translation factors.</text>
</comment>
<comment type="subunit">
    <text evidence="1">Part of the ribosomal stalk of the 50S ribosomal subunit. Interacts with L10 and the large rRNA to form the base of the stalk. L10 forms an elongated spine to which L12 dimers bind in a sequential fashion forming a multimeric L10(L12)X complex.</text>
</comment>
<comment type="PTM">
    <text evidence="1">One or more lysine residues are methylated.</text>
</comment>
<comment type="similarity">
    <text evidence="1">Belongs to the universal ribosomal protein uL11 family.</text>
</comment>
<feature type="chain" id="PRO_0000258128" description="Large ribosomal subunit protein uL11">
    <location>
        <begin position="1"/>
        <end position="143"/>
    </location>
</feature>